<reference key="1">
    <citation type="submission" date="1994-05" db="EMBL/GenBank/DDBJ databases">
        <title>Sequence of the UME6/CAR80 gene from Saccharomyces cerevisiae.</title>
        <authorList>
            <person name="Smart W.C."/>
            <person name="Park H.-D."/>
            <person name="Cooper T.G."/>
        </authorList>
    </citation>
    <scope>NUCLEOTIDE SEQUENCE [GENOMIC DNA]</scope>
    <source>
        <strain>Sigma 1278B</strain>
    </source>
</reference>
<reference key="2">
    <citation type="journal article" date="1994" name="Genes Dev.">
        <title>UME6 is a key regulator of nitrogen repression and meiotic development.</title>
        <authorList>
            <person name="Strich R."/>
            <person name="Surosky R.T."/>
            <person name="Steber C.M."/>
            <person name="Messenguy F."/>
            <person name="Dubois E."/>
            <person name="Easton Esposito R."/>
        </authorList>
    </citation>
    <scope>NUCLEOTIDE SEQUENCE [GENOMIC DNA]</scope>
    <scope>FUNCTION</scope>
</reference>
<reference key="3">
    <citation type="submission" date="1993-12" db="EMBL/GenBank/DDBJ databases">
        <authorList>
            <person name="Kumeno A."/>
        </authorList>
    </citation>
    <scope>NUCLEOTIDE SEQUENCE [GENOMIC DNA]</scope>
    <source>
        <strain>S288c / GRF88</strain>
    </source>
</reference>
<reference key="4">
    <citation type="journal article" date="1997" name="Nature">
        <title>The nucleotide sequence of Saccharomyces cerevisiae chromosome IV.</title>
        <authorList>
            <person name="Jacq C."/>
            <person name="Alt-Moerbe J."/>
            <person name="Andre B."/>
            <person name="Arnold W."/>
            <person name="Bahr A."/>
            <person name="Ballesta J.P.G."/>
            <person name="Bargues M."/>
            <person name="Baron L."/>
            <person name="Becker A."/>
            <person name="Biteau N."/>
            <person name="Bloecker H."/>
            <person name="Blugeon C."/>
            <person name="Boskovic J."/>
            <person name="Brandt P."/>
            <person name="Brueckner M."/>
            <person name="Buitrago M.J."/>
            <person name="Coster F."/>
            <person name="Delaveau T."/>
            <person name="del Rey F."/>
            <person name="Dujon B."/>
            <person name="Eide L.G."/>
            <person name="Garcia-Cantalejo J.M."/>
            <person name="Goffeau A."/>
            <person name="Gomez-Peris A."/>
            <person name="Granotier C."/>
            <person name="Hanemann V."/>
            <person name="Hankeln T."/>
            <person name="Hoheisel J.D."/>
            <person name="Jaeger W."/>
            <person name="Jimenez A."/>
            <person name="Jonniaux J.-L."/>
            <person name="Kraemer C."/>
            <person name="Kuester H."/>
            <person name="Laamanen P."/>
            <person name="Legros Y."/>
            <person name="Louis E.J."/>
            <person name="Moeller-Rieker S."/>
            <person name="Monnet A."/>
            <person name="Moro M."/>
            <person name="Mueller-Auer S."/>
            <person name="Nussbaumer B."/>
            <person name="Paricio N."/>
            <person name="Paulin L."/>
            <person name="Perea J."/>
            <person name="Perez-Alonso M."/>
            <person name="Perez-Ortin J.E."/>
            <person name="Pohl T.M."/>
            <person name="Prydz H."/>
            <person name="Purnelle B."/>
            <person name="Rasmussen S.W."/>
            <person name="Remacha M.A."/>
            <person name="Revuelta J.L."/>
            <person name="Rieger M."/>
            <person name="Salom D."/>
            <person name="Saluz H.P."/>
            <person name="Saiz J.E."/>
            <person name="Saren A.-M."/>
            <person name="Schaefer M."/>
            <person name="Scharfe M."/>
            <person name="Schmidt E.R."/>
            <person name="Schneider C."/>
            <person name="Scholler P."/>
            <person name="Schwarz S."/>
            <person name="Soler-Mira A."/>
            <person name="Urrestarazu L.A."/>
            <person name="Verhasselt P."/>
            <person name="Vissers S."/>
            <person name="Voet M."/>
            <person name="Volckaert G."/>
            <person name="Wagner G."/>
            <person name="Wambutt R."/>
            <person name="Wedler E."/>
            <person name="Wedler H."/>
            <person name="Woelfl S."/>
            <person name="Harris D.E."/>
            <person name="Bowman S."/>
            <person name="Brown D."/>
            <person name="Churcher C.M."/>
            <person name="Connor R."/>
            <person name="Dedman K."/>
            <person name="Gentles S."/>
            <person name="Hamlin N."/>
            <person name="Hunt S."/>
            <person name="Jones L."/>
            <person name="McDonald S."/>
            <person name="Murphy L.D."/>
            <person name="Niblett D."/>
            <person name="Odell C."/>
            <person name="Oliver K."/>
            <person name="Rajandream M.A."/>
            <person name="Richards C."/>
            <person name="Shore L."/>
            <person name="Walsh S.V."/>
            <person name="Barrell B.G."/>
            <person name="Dietrich F.S."/>
            <person name="Mulligan J.T."/>
            <person name="Allen E."/>
            <person name="Araujo R."/>
            <person name="Aviles E."/>
            <person name="Berno A."/>
            <person name="Carpenter J."/>
            <person name="Chen E."/>
            <person name="Cherry J.M."/>
            <person name="Chung E."/>
            <person name="Duncan M."/>
            <person name="Hunicke-Smith S."/>
            <person name="Hyman R.W."/>
            <person name="Komp C."/>
            <person name="Lashkari D."/>
            <person name="Lew H."/>
            <person name="Lin D."/>
            <person name="Mosedale D."/>
            <person name="Nakahara K."/>
            <person name="Namath A."/>
            <person name="Oefner P."/>
            <person name="Oh C."/>
            <person name="Petel F.X."/>
            <person name="Roberts D."/>
            <person name="Schramm S."/>
            <person name="Schroeder M."/>
            <person name="Shogren T."/>
            <person name="Shroff N."/>
            <person name="Winant A."/>
            <person name="Yelton M.A."/>
            <person name="Botstein D."/>
            <person name="Davis R.W."/>
            <person name="Johnston M."/>
            <person name="Andrews S."/>
            <person name="Brinkman R."/>
            <person name="Cooper J."/>
            <person name="Ding H."/>
            <person name="Du Z."/>
            <person name="Favello A."/>
            <person name="Fulton L."/>
            <person name="Gattung S."/>
            <person name="Greco T."/>
            <person name="Hallsworth K."/>
            <person name="Hawkins J."/>
            <person name="Hillier L.W."/>
            <person name="Jier M."/>
            <person name="Johnson D."/>
            <person name="Johnston L."/>
            <person name="Kirsten J."/>
            <person name="Kucaba T."/>
            <person name="Langston Y."/>
            <person name="Latreille P."/>
            <person name="Le T."/>
            <person name="Mardis E."/>
            <person name="Menezes S."/>
            <person name="Miller N."/>
            <person name="Nhan M."/>
            <person name="Pauley A."/>
            <person name="Peluso D."/>
            <person name="Rifkin L."/>
            <person name="Riles L."/>
            <person name="Taich A."/>
            <person name="Trevaskis E."/>
            <person name="Vignati D."/>
            <person name="Wilcox L."/>
            <person name="Wohldman P."/>
            <person name="Vaudin M."/>
            <person name="Wilson R."/>
            <person name="Waterston R."/>
            <person name="Albermann K."/>
            <person name="Hani J."/>
            <person name="Heumann K."/>
            <person name="Kleine K."/>
            <person name="Mewes H.-W."/>
            <person name="Zollner A."/>
            <person name="Zaccaria P."/>
        </authorList>
    </citation>
    <scope>NUCLEOTIDE SEQUENCE [LARGE SCALE GENOMIC DNA]</scope>
    <source>
        <strain>ATCC 204508 / S288c</strain>
    </source>
</reference>
<reference key="5">
    <citation type="journal article" date="2014" name="G3 (Bethesda)">
        <title>The reference genome sequence of Saccharomyces cerevisiae: Then and now.</title>
        <authorList>
            <person name="Engel S.R."/>
            <person name="Dietrich F.S."/>
            <person name="Fisk D.G."/>
            <person name="Binkley G."/>
            <person name="Balakrishnan R."/>
            <person name="Costanzo M.C."/>
            <person name="Dwight S.S."/>
            <person name="Hitz B.C."/>
            <person name="Karra K."/>
            <person name="Nash R.S."/>
            <person name="Weng S."/>
            <person name="Wong E.D."/>
            <person name="Lloyd P."/>
            <person name="Skrzypek M.S."/>
            <person name="Miyasato S.R."/>
            <person name="Simison M."/>
            <person name="Cherry J.M."/>
        </authorList>
    </citation>
    <scope>GENOME REANNOTATION</scope>
    <source>
        <strain>ATCC 204508 / S288c</strain>
    </source>
</reference>
<reference key="6">
    <citation type="journal article" date="1989" name="Proc. Natl. Acad. Sci. U.S.A.">
        <title>Identification of negative regulatory genes that govern the expression of early meiotic genes in yeast.</title>
        <authorList>
            <person name="Strich R."/>
            <person name="Slater M.R."/>
            <person name="Easton Esposito R."/>
        </authorList>
    </citation>
    <scope>FUNCTION</scope>
</reference>
<reference key="7">
    <citation type="journal article" date="1992" name="Genetics">
        <title>Selection for early meiotic mutants in yeast.</title>
        <authorList>
            <person name="Mitchell A.P."/>
            <person name="Bowdish K.S."/>
        </authorList>
    </citation>
    <scope>FUNCTION</scope>
</reference>
<reference key="8">
    <citation type="journal article" date="1992" name="Nucleic Acids Res.">
        <title>The yeast UME6 gene product is required for transcriptional repression mediated by the CAR1 URS1 repressor binding site.</title>
        <authorList>
            <person name="Park H.-D."/>
            <person name="Luche R.M."/>
            <person name="Cooper T.G."/>
        </authorList>
    </citation>
    <scope>FUNCTION</scope>
</reference>
<reference key="9">
    <citation type="journal article" date="1995" name="Mol. Cell. Biol.">
        <title>Positive control of yeast meiotic genes by the negative regulator UME6.</title>
        <authorList>
            <person name="Bowdish K.S."/>
            <person name="Yuan H.E."/>
            <person name="Mitchell A.P."/>
        </authorList>
    </citation>
    <scope>FUNCTION</scope>
</reference>
<reference key="10">
    <citation type="journal article" date="1995" name="Proc. Natl. Acad. Sci. U.S.A.">
        <title>UME6 is a central component of a developmental regulatory switch controlling meiosis-specific gene expression.</title>
        <authorList>
            <person name="Steber C.M."/>
            <person name="Easton Esposito R."/>
        </authorList>
    </citation>
    <scope>FUNCTION</scope>
</reference>
<reference key="11">
    <citation type="journal article" date="1995" name="Protein Sci.">
        <title>UME6, a negative regulator of meiosis in Saccharomyces cerevisiae, contains a C-terminal Zn2Cys6 binuclear cluster that binds the URS1 DNA sequence in a zinc-dependent manner.</title>
        <authorList>
            <person name="Anderson S.F."/>
            <person name="Steber C.M."/>
            <person name="Easton Esposito R."/>
            <person name="Coleman J.E."/>
        </authorList>
    </citation>
    <scope>DOMAIN</scope>
    <scope>DNA-BINDING</scope>
</reference>
<reference key="12">
    <citation type="journal article" date="1996" name="Mol. Cell. Biol.">
        <title>Induction of meiosis in Saccharomyces cerevisiae depends on conversion of the transcriptional represssor Ume6 to a positive regulator by its regulated association with the transcriptional activator Ime1.</title>
        <authorList>
            <person name="Rubin-Bejerano I."/>
            <person name="Mandel S."/>
            <person name="Robzyk K."/>
            <person name="Kassir Y."/>
        </authorList>
    </citation>
    <scope>FUNCTION</scope>
    <scope>INTERACTION WITH IME1</scope>
</reference>
<reference key="13">
    <citation type="journal article" date="1996" name="Nucleic Acids Res.">
        <title>The yeast UME6 gene is required for both negative and positive transcriptional regulation of phospholipid biosynthetic gene expression.</title>
        <authorList>
            <person name="Jackson J.C."/>
            <person name="Lopes J.M."/>
        </authorList>
    </citation>
    <scope>FUNCTION</scope>
</reference>
<reference key="14">
    <citation type="journal article" date="1997" name="Cell">
        <title>Repression by Ume6 involves recruitment of a complex containing Sin3 corepressor and Rpd3 histone deacetylase to target promoters.</title>
        <authorList>
            <person name="Kadosh D."/>
            <person name="Struhl K."/>
        </authorList>
    </citation>
    <scope>FUNCTION</scope>
    <scope>DOMAIN</scope>
    <scope>INTERACTION WITH SIN3</scope>
</reference>
<reference key="15">
    <citation type="journal article" date="1997" name="Mol. Cell. Biol.">
        <title>Role of UME6 in transcriptional regulation of a DNA repair gene in Saccharomyces cerevisiae.</title>
        <authorList>
            <person name="Sweet D.H."/>
            <person name="Jang Y.K."/>
            <person name="Sancar G.B."/>
        </authorList>
    </citation>
    <scope>FUNCTION</scope>
    <scope>DNA-BINDING</scope>
</reference>
<reference key="16">
    <citation type="journal article" date="1997" name="Mol. Cell. Biol.">
        <title>Interaction of yeast repressor-activator protein Ume6p with glycogen synthase kinase 3 homolog Rim11p.</title>
        <authorList>
            <person name="Malathi K."/>
            <person name="Xiao Y."/>
            <person name="Mitchell A.P."/>
        </authorList>
    </citation>
    <scope>FUNCTION</scope>
    <scope>INTERACTION WITH RIM11 AND IME1</scope>
    <scope>PHOSPHORYLATION</scope>
    <scope>MUTAGENESIS OF THR-99 AND 99-THR--SER-109</scope>
</reference>
<reference key="17">
    <citation type="journal article" date="1998" name="Mol. Cell. Biol.">
        <title>Targeted recruitment of the Sin3-Rpd3 histone deacetylase complex generates a highly localized domain of repressed chromatin in vivo.</title>
        <authorList>
            <person name="Kadosh D."/>
            <person name="Struhl K."/>
        </authorList>
    </citation>
    <scope>FUNCTION</scope>
</reference>
<reference key="18">
    <citation type="journal article" date="1998" name="Nature">
        <title>Transcriptional repression by UME6 involves deacetylation of lysine 5 of histone H4 by RPD3.</title>
        <authorList>
            <person name="Rundlett S.E."/>
            <person name="Carmen A.A."/>
            <person name="Suka N."/>
            <person name="Turner B.M."/>
            <person name="Grunstein M."/>
        </authorList>
    </citation>
    <scope>FUNCTION</scope>
</reference>
<reference key="19">
    <citation type="journal article" date="2000" name="Cell">
        <title>The Isw2 chromatin remodeling complex represses early meiotic genes upon recruitment by Ume6p.</title>
        <authorList>
            <person name="Goldmark J.P."/>
            <person name="Fazzio T.G."/>
            <person name="Estep P.W."/>
            <person name="Church G.M."/>
            <person name="Tsukiyama T."/>
        </authorList>
    </citation>
    <scope>FUNCTION</scope>
    <scope>DNA-BINDING</scope>
</reference>
<reference key="20">
    <citation type="journal article" date="2000" name="Mol. Cell. Biol.">
        <title>Shared roles of yeast glycogen synthase kinase 3 family members in nitrogen-responsive phosphorylation of meiotic regulator Ume6p.</title>
        <authorList>
            <person name="Xiao Y."/>
            <person name="Mitchell A.P."/>
        </authorList>
    </citation>
    <scope>FUNCTION</scope>
    <scope>PHOSPHORYLATION</scope>
    <scope>MUTAGENESIS OF THR-99; THR-103 AND SER-107</scope>
    <scope>INTERACTION WITH MCK1</scope>
</reference>
<reference key="21">
    <citation type="journal article" date="2000" name="Nucleic Acids Res.">
        <title>Combinatorial regulation of phospholipid biosynthetic gene expression by the UME6, SIN3 and RPD3 genes.</title>
        <authorList>
            <person name="Elkhaimi M."/>
            <person name="Kaadige M.R."/>
            <person name="Kamath D."/>
            <person name="Jackson J.C."/>
            <person name="Biliran H. Jr."/>
            <person name="Lopes J.M."/>
        </authorList>
    </citation>
    <scope>FUNCTION</scope>
</reference>
<reference key="22">
    <citation type="journal article" date="2001" name="Mol. Cell. Biol.">
        <title>Identification of the Sin3-binding site in Ume6 defines a two-step process for conversion of Ume6 from a transcriptional repressor to an activator in yeast.</title>
        <authorList>
            <person name="Washburn B.K."/>
            <person name="Easton Esposito R."/>
        </authorList>
    </citation>
    <scope>FUNCTION</scope>
    <scope>INTERACTION WITH SIN3 AND TEA1</scope>
    <scope>MUTAGENESIS OF ALA-523; ALA-524; ALA-525; VAL-526; LEU-527; SER-528; MET-530 AND LYS-635</scope>
</reference>
<reference key="23">
    <citation type="journal article" date="2002" name="Proc. Natl. Acad. Sci. U.S.A.">
        <title>The Ume6 regulon coordinates metabolic and meiotic gene expression in yeast.</title>
        <authorList>
            <person name="Williams R.M."/>
            <person name="Primig M."/>
            <person name="Washburn B.K."/>
            <person name="Winzeler E.A."/>
            <person name="Bellis M."/>
            <person name="Sarrauste de Menthiere C."/>
            <person name="Davis R.W."/>
            <person name="Easton Esposito R."/>
        </authorList>
    </citation>
    <scope>FUNCTION</scope>
</reference>
<reference key="24">
    <citation type="journal article" date="2003" name="DNA Res.">
        <title>Discovery of novel transcription control relationships with gene regulatory networks generated from multiple-disruption full genome expression libraries.</title>
        <authorList>
            <person name="Aburatani S."/>
            <person name="Tashiro K."/>
            <person name="Savoie C.J."/>
            <person name="Nishizawa M."/>
            <person name="Hayashi K."/>
            <person name="Ito Y."/>
            <person name="Muta S."/>
            <person name="Yamamoto K."/>
            <person name="Ogawa M."/>
            <person name="Enomoto A."/>
            <person name="Masaki M."/>
            <person name="Watanabe S."/>
            <person name="Maki Y."/>
            <person name="Takahashi Y."/>
            <person name="Eguchi Y."/>
            <person name="Sakaki Y."/>
            <person name="Kuhara S."/>
        </authorList>
    </citation>
    <scope>FUNCTION</scope>
</reference>
<reference key="25">
    <citation type="journal article" date="2003" name="Nature">
        <title>Global analysis of protein localization in budding yeast.</title>
        <authorList>
            <person name="Huh W.-K."/>
            <person name="Falvo J.V."/>
            <person name="Gerke L.C."/>
            <person name="Carroll A.S."/>
            <person name="Howson R.W."/>
            <person name="Weissman J.S."/>
            <person name="O'Shea E.K."/>
        </authorList>
    </citation>
    <scope>SUBCELLULAR LOCATION [LARGE SCALE ANALYSIS]</scope>
</reference>
<reference key="26">
    <citation type="journal article" date="2003" name="Nature">
        <title>Global analysis of protein expression in yeast.</title>
        <authorList>
            <person name="Ghaemmaghami S."/>
            <person name="Huh W.-K."/>
            <person name="Bower K."/>
            <person name="Howson R.W."/>
            <person name="Belle A."/>
            <person name="Dephoure N."/>
            <person name="O'Shea E.K."/>
            <person name="Weissman J.S."/>
        </authorList>
    </citation>
    <scope>LEVEL OF PROTEIN EXPRESSION [LARGE SCALE ANALYSIS]</scope>
</reference>
<reference key="27">
    <citation type="journal article" date="2003" name="Nucleic Acids Res.">
        <title>Yeast Ume6p repressor permits activator binding but restricts TBP binding at the HOP1 promoter.</title>
        <authorList>
            <person name="Shimizu M."/>
            <person name="Takahashi K."/>
            <person name="Lamb T.M."/>
            <person name="Shindo H."/>
            <person name="Mitchell A.P."/>
        </authorList>
    </citation>
    <scope>FUNCTION</scope>
</reference>
<reference key="28">
    <citation type="journal article" date="2005" name="Biochim. Biophys. Acta">
        <title>Stable incorporation of sequence specific repressors Ash1 and Ume6 into the Rpd3L complex.</title>
        <authorList>
            <person name="Carrozza M.J."/>
            <person name="Florens L."/>
            <person name="Swanson S.K."/>
            <person name="Shia W.-J."/>
            <person name="Anderson S."/>
            <person name="Yates J."/>
            <person name="Washburn M.P."/>
            <person name="Workman J.L."/>
        </authorList>
    </citation>
    <scope>IDENTIFICATION IN THE RPD3C(L) COMPLEX</scope>
    <scope>IDENTIFICATION BY MASS SPECTROMETRY</scope>
</reference>
<reference key="29">
    <citation type="journal article" date="2005" name="Genome Res.">
        <title>Identification of functional transcription factor binding sites using closely related Saccharomyces species.</title>
        <authorList>
            <person name="Doniger S.W."/>
            <person name="Huh J."/>
            <person name="Fay J.C."/>
        </authorList>
    </citation>
    <scope>FUNCTION</scope>
    <scope>DNA-BINDING</scope>
</reference>
<reference key="30">
    <citation type="journal article" date="2007" name="J. Proteome Res.">
        <title>Large-scale phosphorylation analysis of alpha-factor-arrested Saccharomyces cerevisiae.</title>
        <authorList>
            <person name="Li X."/>
            <person name="Gerber S.A."/>
            <person name="Rudner A.D."/>
            <person name="Beausoleil S.A."/>
            <person name="Haas W."/>
            <person name="Villen J."/>
            <person name="Elias J.E."/>
            <person name="Gygi S.P."/>
        </authorList>
    </citation>
    <scope>IDENTIFICATION BY MASS SPECTROMETRY [LARGE SCALE ANALYSIS]</scope>
    <source>
        <strain>ADR376</strain>
    </source>
</reference>
<reference key="31">
    <citation type="journal article" date="2008" name="Mol. Cell. Proteomics">
        <title>A multidimensional chromatography technology for in-depth phosphoproteome analysis.</title>
        <authorList>
            <person name="Albuquerque C.P."/>
            <person name="Smolka M.B."/>
            <person name="Payne S.H."/>
            <person name="Bafna V."/>
            <person name="Eng J."/>
            <person name="Zhou H."/>
        </authorList>
    </citation>
    <scope>PHOSPHORYLATION [LARGE SCALE ANALYSIS] AT SER-141 AND SER-150</scope>
    <scope>IDENTIFICATION BY MASS SPECTROMETRY [LARGE SCALE ANALYSIS]</scope>
</reference>
<reference key="32">
    <citation type="journal article" date="2009" name="Science">
        <title>Global analysis of Cdk1 substrate phosphorylation sites provides insights into evolution.</title>
        <authorList>
            <person name="Holt L.J."/>
            <person name="Tuch B.B."/>
            <person name="Villen J."/>
            <person name="Johnson A.D."/>
            <person name="Gygi S.P."/>
            <person name="Morgan D.O."/>
        </authorList>
    </citation>
    <scope>PHOSPHORYLATION [LARGE SCALE ANALYSIS] AT SER-114; SER-141; SER-150; SER-228; SER-316; SER-318 AND SER-645</scope>
    <scope>IDENTIFICATION BY MASS SPECTROMETRY [LARGE SCALE ANALYSIS]</scope>
</reference>
<gene>
    <name type="primary">UME6</name>
    <name type="synonym">CAR80</name>
    <name type="synonym">CARGR1</name>
    <name type="synonym">NIM2</name>
    <name type="synonym">RIM16</name>
    <name type="ordered locus">YDR207C</name>
    <name type="ORF">YD8142.04C</name>
</gene>
<protein>
    <recommendedName>
        <fullName>Transcriptional regulatory protein UME6</fullName>
    </recommendedName>
    <alternativeName>
        <fullName>Negative transcriptional regulator of IME2</fullName>
    </alternativeName>
    <alternativeName>
        <fullName>Regulator of inducer of meiosis protein 16</fullName>
    </alternativeName>
    <alternativeName>
        <fullName>Unscheduled meiotic gene expression protein 6</fullName>
    </alternativeName>
</protein>
<name>UME6_YEAST</name>
<keyword id="KW-0002">3D-structure</keyword>
<keyword id="KW-0010">Activator</keyword>
<keyword id="KW-0156">Chromatin regulator</keyword>
<keyword id="KW-0238">DNA-binding</keyword>
<keyword id="KW-0479">Metal-binding</keyword>
<keyword id="KW-0539">Nucleus</keyword>
<keyword id="KW-0597">Phosphoprotein</keyword>
<keyword id="KW-1185">Reference proteome</keyword>
<keyword id="KW-0678">Repressor</keyword>
<keyword id="KW-0804">Transcription</keyword>
<keyword id="KW-0805">Transcription regulation</keyword>
<keyword id="KW-0862">Zinc</keyword>
<organism>
    <name type="scientific">Saccharomyces cerevisiae (strain ATCC 204508 / S288c)</name>
    <name type="common">Baker's yeast</name>
    <dbReference type="NCBI Taxonomy" id="559292"/>
    <lineage>
        <taxon>Eukaryota</taxon>
        <taxon>Fungi</taxon>
        <taxon>Dikarya</taxon>
        <taxon>Ascomycota</taxon>
        <taxon>Saccharomycotina</taxon>
        <taxon>Saccharomycetes</taxon>
        <taxon>Saccharomycetales</taxon>
        <taxon>Saccharomycetaceae</taxon>
        <taxon>Saccharomyces</taxon>
    </lineage>
</organism>
<evidence type="ECO:0000255" key="1">
    <source>
        <dbReference type="PROSITE-ProRule" id="PRU00227"/>
    </source>
</evidence>
<evidence type="ECO:0000256" key="2">
    <source>
        <dbReference type="SAM" id="MobiDB-lite"/>
    </source>
</evidence>
<evidence type="ECO:0000269" key="3">
    <source>
    </source>
</evidence>
<evidence type="ECO:0000269" key="4">
    <source>
    </source>
</evidence>
<evidence type="ECO:0000269" key="5">
    <source>
    </source>
</evidence>
<evidence type="ECO:0000269" key="6">
    <source>
    </source>
</evidence>
<evidence type="ECO:0000269" key="7">
    <source>
    </source>
</evidence>
<evidence type="ECO:0000269" key="8">
    <source>
    </source>
</evidence>
<evidence type="ECO:0000269" key="9">
    <source>
    </source>
</evidence>
<evidence type="ECO:0000269" key="10">
    <source>
    </source>
</evidence>
<evidence type="ECO:0000269" key="11">
    <source>
    </source>
</evidence>
<evidence type="ECO:0000269" key="12">
    <source>
    </source>
</evidence>
<evidence type="ECO:0000269" key="13">
    <source>
    </source>
</evidence>
<evidence type="ECO:0000269" key="14">
    <source>
    </source>
</evidence>
<evidence type="ECO:0000269" key="15">
    <source>
    </source>
</evidence>
<evidence type="ECO:0000269" key="16">
    <source>
    </source>
</evidence>
<evidence type="ECO:0000269" key="17">
    <source>
    </source>
</evidence>
<evidence type="ECO:0000269" key="18">
    <source>
    </source>
</evidence>
<evidence type="ECO:0000269" key="19">
    <source>
    </source>
</evidence>
<evidence type="ECO:0000269" key="20">
    <source>
    </source>
</evidence>
<evidence type="ECO:0000269" key="21">
    <source>
    </source>
</evidence>
<evidence type="ECO:0000269" key="22">
    <source>
    </source>
</evidence>
<evidence type="ECO:0000269" key="23">
    <source>
    </source>
</evidence>
<evidence type="ECO:0000269" key="24">
    <source>
    </source>
</evidence>
<evidence type="ECO:0000269" key="25">
    <source>
    </source>
</evidence>
<evidence type="ECO:0000269" key="26">
    <source>
    </source>
</evidence>
<evidence type="ECO:0000305" key="27"/>
<evidence type="ECO:0007744" key="28">
    <source>
    </source>
</evidence>
<evidence type="ECO:0007744" key="29">
    <source>
    </source>
</evidence>
<evidence type="ECO:0007829" key="30">
    <source>
        <dbReference type="PDB" id="6XAW"/>
    </source>
</evidence>
<sequence>MLDKARSQSKHMDESNAAASLLSMETTANNHHYLHNKTSRATLMNSSQDGKKHAEDEVSDGANSRHPTISSASIESLKTTYDENPLLSIMKSTCAPNNTPVHTPSGSPSLKVQSGGDIKDDPKENDTTTTTNTTLQDRRDSDNAVHAAASPLAPSNTPSDPKSLCNGHVAQATDPQISGAIQPQYTATNEDVFPYSSTSTNSNTATTTIVAGAKKKIHLPPPQAPAVSSPGTTAAGSGAGTGSGIRSRTGSDLPLIITSANKNNGKTTNSPMSILSRNNSTNNNDNNSIQSSDSRESSNNNEIGGYLRGGTKRGGSPSNDSQVQHNVHDDQCAVGVAPRNFYFNKDREITDPNVKLDENESKINISFWLNSKYRDEAYSLNESSSNNASSNTDTPTNSRHANTSSSITSRNNFQHFRFNQIPSQPPTSASSFTSTNNNNPQRNNINRGEDPFATSSRPSTGFFYGDLPNRNNRNSPFHTNEQYIPPPPPKYINSKLDGLRSRLLLGPNSASSSTKLDDDLGTAAAVLSNMRSSPYRTHDKPISNVNDMNNTNALGVPASRPHSSSFPSKGVLRPILLRIHNSEQQPIFESNNSTAVFDEDQDQNQDLSPYHLNLNSKKVLDPTFESRTRQVTWNKNGKRIDRRLSAPEQQQQLEVPPLKKSRRSVGNARVASQTNSDYNSLGESSTSSAPSSPSLKASSGLAYTADYPNATSPDFAKSKGKNVKPKAKSKAKQSSKKRPNNTTSKSKANNSQESNNATSSTSQGTRSRTGCWICRLRKKKCTEERPHCFNCERLKLDCHYDAFKPDFVSDPKKKQMKLEEIKKKTKEAKRRAMKKK</sequence>
<feature type="chain" id="PRO_0000114987" description="Transcriptional regulatory protein UME6">
    <location>
        <begin position="1"/>
        <end position="836"/>
    </location>
</feature>
<feature type="DNA-binding region" description="Zn(2)-C6 fungal-type" evidence="1">
    <location>
        <begin position="771"/>
        <end position="798"/>
    </location>
</feature>
<feature type="region of interest" description="Disordered" evidence="2">
    <location>
        <begin position="1"/>
        <end position="77"/>
    </location>
</feature>
<feature type="region of interest" description="Disordered" evidence="2">
    <location>
        <begin position="92"/>
        <end position="168"/>
    </location>
</feature>
<feature type="region of interest" description="Disordered" evidence="2">
    <location>
        <begin position="218"/>
        <end position="332"/>
    </location>
</feature>
<feature type="region of interest" description="Disordered" evidence="2">
    <location>
        <begin position="381"/>
        <end position="464"/>
    </location>
</feature>
<feature type="region of interest" description="SIN3-binding">
    <location>
        <begin position="508"/>
        <end position="594"/>
    </location>
</feature>
<feature type="region of interest" description="Disordered" evidence="2">
    <location>
        <begin position="636"/>
        <end position="766"/>
    </location>
</feature>
<feature type="compositionally biased region" description="Basic and acidic residues" evidence="2">
    <location>
        <begin position="1"/>
        <end position="14"/>
    </location>
</feature>
<feature type="compositionally biased region" description="Polar residues" evidence="2">
    <location>
        <begin position="39"/>
        <end position="48"/>
    </location>
</feature>
<feature type="compositionally biased region" description="Polar residues" evidence="2">
    <location>
        <begin position="61"/>
        <end position="77"/>
    </location>
</feature>
<feature type="compositionally biased region" description="Polar residues" evidence="2">
    <location>
        <begin position="92"/>
        <end position="112"/>
    </location>
</feature>
<feature type="compositionally biased region" description="Basic and acidic residues" evidence="2">
    <location>
        <begin position="117"/>
        <end position="126"/>
    </location>
</feature>
<feature type="compositionally biased region" description="Low complexity" evidence="2">
    <location>
        <begin position="226"/>
        <end position="236"/>
    </location>
</feature>
<feature type="compositionally biased region" description="Polar residues" evidence="2">
    <location>
        <begin position="258"/>
        <end position="272"/>
    </location>
</feature>
<feature type="compositionally biased region" description="Low complexity" evidence="2">
    <location>
        <begin position="273"/>
        <end position="305"/>
    </location>
</feature>
<feature type="compositionally biased region" description="Polar residues" evidence="2">
    <location>
        <begin position="316"/>
        <end position="325"/>
    </location>
</feature>
<feature type="compositionally biased region" description="Low complexity" evidence="2">
    <location>
        <begin position="381"/>
        <end position="398"/>
    </location>
</feature>
<feature type="compositionally biased region" description="Polar residues" evidence="2">
    <location>
        <begin position="399"/>
        <end position="414"/>
    </location>
</feature>
<feature type="compositionally biased region" description="Low complexity" evidence="2">
    <location>
        <begin position="426"/>
        <end position="446"/>
    </location>
</feature>
<feature type="compositionally biased region" description="Polar residues" evidence="2">
    <location>
        <begin position="670"/>
        <end position="679"/>
    </location>
</feature>
<feature type="compositionally biased region" description="Low complexity" evidence="2">
    <location>
        <begin position="680"/>
        <end position="702"/>
    </location>
</feature>
<feature type="compositionally biased region" description="Basic residues" evidence="2">
    <location>
        <begin position="718"/>
        <end position="739"/>
    </location>
</feature>
<feature type="compositionally biased region" description="Low complexity" evidence="2">
    <location>
        <begin position="740"/>
        <end position="751"/>
    </location>
</feature>
<feature type="modified residue" description="Phosphoserine" evidence="29">
    <location>
        <position position="114"/>
    </location>
</feature>
<feature type="modified residue" description="Phosphoserine" evidence="28 29">
    <location>
        <position position="141"/>
    </location>
</feature>
<feature type="modified residue" description="Phosphoserine" evidence="28 29">
    <location>
        <position position="150"/>
    </location>
</feature>
<feature type="modified residue" description="Phosphoserine" evidence="29">
    <location>
        <position position="228"/>
    </location>
</feature>
<feature type="modified residue" description="Phosphoserine" evidence="29">
    <location>
        <position position="316"/>
    </location>
</feature>
<feature type="modified residue" description="Phosphoserine" evidence="29">
    <location>
        <position position="318"/>
    </location>
</feature>
<feature type="modified residue" description="Phosphoserine" evidence="29">
    <location>
        <position position="645"/>
    </location>
</feature>
<feature type="mutagenesis site" description="Impairs meiotic genes expression, sporulation and interactions with IME1 and RIM11, and abolishes phosphorylation." evidence="24">
    <original>TPVHTPSGSPS</original>
    <variation>APVHAPAGAPA</variation>
    <location>
        <begin position="99"/>
        <end position="109"/>
    </location>
</feature>
<feature type="mutagenesis site" description="Impairs meiotic genes expression and sporulation, reduces the interaction with IME1, and abolishes phosphorylation.">
    <original>TPVHTPSGS</original>
    <variation>APVHAPSGA</variation>
    <location>
        <begin position="99"/>
        <end position="107"/>
    </location>
</feature>
<feature type="mutagenesis site" description="Impairs meiotic genes expression and sporulation, reduces interactions with IME1 and RIM11, and reduces phosphorylation." evidence="3 24">
    <original>T</original>
    <variation>N</variation>
    <variation>A</variation>
    <location>
        <position position="99"/>
    </location>
</feature>
<feature type="mutagenesis site" description="Impairs meiotic genes expression and sporulation, reduces interaction with IME, and reduces phosphorylation." evidence="3">
    <original>T</original>
    <variation>A</variation>
    <location>
        <position position="103"/>
    </location>
</feature>
<feature type="mutagenesis site" description="Impairs meiotic genes expression and sporulation, reduces interaction with IME, and reduces phosphorylation." evidence="3">
    <original>S</original>
    <variation>A</variation>
    <location>
        <position position="107"/>
    </location>
</feature>
<feature type="mutagenesis site" description="Impairs SIN3-binding and gene repression activity." evidence="6">
    <original>A</original>
    <variation>S</variation>
    <location>
        <position position="523"/>
    </location>
</feature>
<feature type="mutagenesis site" description="Impairs gene repression activity." evidence="6">
    <original>A</original>
    <variation>T</variation>
    <location>
        <position position="524"/>
    </location>
</feature>
<feature type="mutagenesis site" description="Impairs gene repression activity." evidence="6">
    <location>
        <position position="525"/>
    </location>
</feature>
<feature type="mutagenesis site" description="Impairs gene repression activity." evidence="6">
    <original>V</original>
    <variation>Q</variation>
    <location>
        <position position="526"/>
    </location>
</feature>
<feature type="mutagenesis site" description="Impairs SIN3-binding and gene repression activity." evidence="6">
    <original>L</original>
    <variation>P</variation>
    <location>
        <position position="527"/>
    </location>
</feature>
<feature type="mutagenesis site" description="Impairs SIN3-binding and gene repression activity." evidence="6">
    <original>S</original>
    <variation>P</variation>
    <location>
        <position position="528"/>
    </location>
</feature>
<feature type="mutagenesis site" description="Impairs SIN3-binding and gene repression activity." evidence="6">
    <original>M</original>
    <variation>T</variation>
    <variation>V</variation>
    <location>
        <position position="530"/>
    </location>
</feature>
<feature type="mutagenesis site" description="Impairs gene repression activity." evidence="6">
    <original>K</original>
    <variation>E</variation>
    <location>
        <position position="635"/>
    </location>
</feature>
<feature type="sequence conflict" description="In Ref. 3; BAA04890." evidence="27" ref="3">
    <original>V</original>
    <variation>G</variation>
    <location>
        <position position="101"/>
    </location>
</feature>
<feature type="sequence conflict" description="In Ref. 1; AAA34471." evidence="27" ref="1">
    <original>I</original>
    <variation>V</variation>
    <location>
        <position position="363"/>
    </location>
</feature>
<feature type="sequence conflict" description="In Ref. 1; AAA34471." evidence="27" ref="1">
    <original>N</original>
    <variation>T</variation>
    <location>
        <position position="443"/>
    </location>
</feature>
<feature type="sequence conflict" description="In Ref. 1; AAA34471." evidence="27" ref="1">
    <original>G</original>
    <variation>D</variation>
    <location>
        <position position="465"/>
    </location>
</feature>
<feature type="helix" evidence="30">
    <location>
        <begin position="517"/>
        <end position="528"/>
    </location>
</feature>
<comment type="function">
    <text evidence="3 4 5 6 7 8 9 12 13 14 16 17 18 19 20 21 22 23 24 25 26">Component of the RPD3C(L) histone deacetylase complex (HDAC) responsible for the deacetylation of lysine residues on the N-terminal part of the core histones (H2A, H2B, H3 and H4). Histone deacetylation gives a tag for epigenetic repression and plays an important role in transcriptional regulation, cell cycle progression and developmental events. Binds to the URS1 site (5'-AGCCGCCGA-3') and recruits the RPD3 histone deacetylase complex to the promoters to negatively regulate the expression of many genes including CAR1 (arginase), several required for sporulation, mating type switching, inositol metabolism, and oxidative carbon metabolism. Also recruits the ISW2 chromatin remodeling complex to promoters in a second gene repression pathway. Associates with the master regulator of meiosis IME1 in order to activate the expression of meiosis genes. Has both a positive and negative role in regulating phospholipid biosynthesis.</text>
</comment>
<comment type="subunit">
    <text evidence="3 6 15 21 22 24">Component of the RPD3C(L) complex composed of at least ASH1, CTI6, DEP1, PHO23, RPD3, RXT2, RXT3, SAP30, SDS3, SIN3, UME1 and UME6. Interacts with RIM11, MCK1 and IME1.</text>
</comment>
<comment type="interaction">
    <interactant intactId="EBI-20086">
        <id>P39001</id>
    </interactant>
    <interactant intactId="EBI-9199">
        <id>P21190</id>
        <label>IME1</label>
    </interactant>
    <organismsDiffer>false</organismsDiffer>
    <experiments>3</experiments>
</comment>
<comment type="subcellular location">
    <subcellularLocation>
        <location evidence="1 10">Nucleus</location>
    </subcellularLocation>
</comment>
<comment type="PTM">
    <text evidence="3 24">Phosphorylated by RIM11 and MCK1.</text>
</comment>
<comment type="miscellaneous">
    <text evidence="11">Present with 217 molecules/cell in log phase SD medium.</text>
</comment>
<proteinExistence type="evidence at protein level"/>
<dbReference type="EMBL" id="L32186">
    <property type="protein sequence ID" value="AAA34471.1"/>
    <property type="molecule type" value="Genomic_DNA"/>
</dbReference>
<dbReference type="EMBL" id="L24539">
    <property type="protein sequence ID" value="AAC14472.1"/>
    <property type="molecule type" value="Unassigned_DNA"/>
</dbReference>
<dbReference type="EMBL" id="D23663">
    <property type="protein sequence ID" value="BAA04890.1"/>
    <property type="molecule type" value="Genomic_DNA"/>
</dbReference>
<dbReference type="EMBL" id="Z68194">
    <property type="protein sequence ID" value="CAA92346.1"/>
    <property type="molecule type" value="Genomic_DNA"/>
</dbReference>
<dbReference type="EMBL" id="BK006938">
    <property type="protein sequence ID" value="DAA12048.1"/>
    <property type="molecule type" value="Genomic_DNA"/>
</dbReference>
<dbReference type="PIR" id="S61570">
    <property type="entry name" value="S61570"/>
</dbReference>
<dbReference type="RefSeq" id="NP_010493.1">
    <property type="nucleotide sequence ID" value="NM_001180515.1"/>
</dbReference>
<dbReference type="PDB" id="6XAW">
    <property type="method" value="X-ray"/>
    <property type="resolution" value="1.84 A"/>
    <property type="chains" value="B=500-543"/>
</dbReference>
<dbReference type="PDBsum" id="6XAW"/>
<dbReference type="SMR" id="P39001"/>
<dbReference type="BioGRID" id="32257">
    <property type="interactions" value="1076"/>
</dbReference>
<dbReference type="ComplexPortal" id="CPX-1415">
    <property type="entry name" value="IME1-UME6 transcription activation complex"/>
</dbReference>
<dbReference type="DIP" id="DIP-959N"/>
<dbReference type="ELM" id="P39001"/>
<dbReference type="FunCoup" id="P39001">
    <property type="interactions" value="1843"/>
</dbReference>
<dbReference type="IntAct" id="P39001">
    <property type="interactions" value="14"/>
</dbReference>
<dbReference type="MINT" id="P39001"/>
<dbReference type="STRING" id="4932.YDR207C"/>
<dbReference type="GlyGen" id="P39001">
    <property type="glycosylation" value="1 site, 1 O-linked glycan (1 site)"/>
</dbReference>
<dbReference type="iPTMnet" id="P39001"/>
<dbReference type="PaxDb" id="4932-YDR207C"/>
<dbReference type="PeptideAtlas" id="P39001"/>
<dbReference type="EnsemblFungi" id="YDR207C_mRNA">
    <property type="protein sequence ID" value="YDR207C"/>
    <property type="gene ID" value="YDR207C"/>
</dbReference>
<dbReference type="GeneID" id="851788"/>
<dbReference type="KEGG" id="sce:YDR207C"/>
<dbReference type="AGR" id="SGD:S000002615"/>
<dbReference type="SGD" id="S000002615">
    <property type="gene designation" value="UME6"/>
</dbReference>
<dbReference type="VEuPathDB" id="FungiDB:YDR207C"/>
<dbReference type="eggNOG" id="ENOG502RX7Y">
    <property type="taxonomic scope" value="Eukaryota"/>
</dbReference>
<dbReference type="HOGENOM" id="CLU_022046_0_0_1"/>
<dbReference type="InParanoid" id="P39001"/>
<dbReference type="OMA" id="CAPNNTP"/>
<dbReference type="OrthoDB" id="3251668at2759"/>
<dbReference type="BioCyc" id="YEAST:G3O-29791-MONOMER"/>
<dbReference type="BioGRID-ORCS" id="851788">
    <property type="hits" value="3 hits in 13 CRISPR screens"/>
</dbReference>
<dbReference type="PRO" id="PR:P39001"/>
<dbReference type="Proteomes" id="UP000002311">
    <property type="component" value="Chromosome IV"/>
</dbReference>
<dbReference type="RNAct" id="P39001">
    <property type="molecule type" value="protein"/>
</dbReference>
<dbReference type="GO" id="GO:0005634">
    <property type="term" value="C:nucleus"/>
    <property type="evidence" value="ECO:0000303"/>
    <property type="project" value="ComplexPortal"/>
</dbReference>
<dbReference type="GO" id="GO:0033698">
    <property type="term" value="C:Rpd3L complex"/>
    <property type="evidence" value="ECO:0000314"/>
    <property type="project" value="SGD"/>
</dbReference>
<dbReference type="GO" id="GO:0070210">
    <property type="term" value="C:Rpd3L-Expanded complex"/>
    <property type="evidence" value="ECO:0007005"/>
    <property type="project" value="SGD"/>
</dbReference>
<dbReference type="GO" id="GO:0005667">
    <property type="term" value="C:transcription regulator complex"/>
    <property type="evidence" value="ECO:0000303"/>
    <property type="project" value="ComplexPortal"/>
</dbReference>
<dbReference type="GO" id="GO:0140297">
    <property type="term" value="F:DNA-binding transcription factor binding"/>
    <property type="evidence" value="ECO:0000314"/>
    <property type="project" value="SGD"/>
</dbReference>
<dbReference type="GO" id="GO:0001227">
    <property type="term" value="F:DNA-binding transcription repressor activity, RNA polymerase II-specific"/>
    <property type="evidence" value="ECO:0000314"/>
    <property type="project" value="SGD"/>
</dbReference>
<dbReference type="GO" id="GO:0000978">
    <property type="term" value="F:RNA polymerase II cis-regulatory region sequence-specific DNA binding"/>
    <property type="evidence" value="ECO:0000314"/>
    <property type="project" value="SGD"/>
</dbReference>
<dbReference type="GO" id="GO:0043565">
    <property type="term" value="F:sequence-specific DNA binding"/>
    <property type="evidence" value="ECO:0007005"/>
    <property type="project" value="SGD"/>
</dbReference>
<dbReference type="GO" id="GO:0008270">
    <property type="term" value="F:zinc ion binding"/>
    <property type="evidence" value="ECO:0007669"/>
    <property type="project" value="InterPro"/>
</dbReference>
<dbReference type="GO" id="GO:0006995">
    <property type="term" value="P:cellular response to nitrogen starvation"/>
    <property type="evidence" value="ECO:0000315"/>
    <property type="project" value="SGD"/>
</dbReference>
<dbReference type="GO" id="GO:0006338">
    <property type="term" value="P:chromatin remodeling"/>
    <property type="evidence" value="ECO:0000315"/>
    <property type="project" value="SGD"/>
</dbReference>
<dbReference type="GO" id="GO:0034389">
    <property type="term" value="P:lipid droplet organization"/>
    <property type="evidence" value="ECO:0000315"/>
    <property type="project" value="SGD"/>
</dbReference>
<dbReference type="GO" id="GO:0051321">
    <property type="term" value="P:meiotic cell cycle"/>
    <property type="evidence" value="ECO:0000315"/>
    <property type="project" value="SGD"/>
</dbReference>
<dbReference type="GO" id="GO:0000278">
    <property type="term" value="P:mitotic cell cycle"/>
    <property type="evidence" value="ECO:0000315"/>
    <property type="project" value="SGD"/>
</dbReference>
<dbReference type="GO" id="GO:1900089">
    <property type="term" value="P:negative regulation of inositol biosynthetic process"/>
    <property type="evidence" value="ECO:0000315"/>
    <property type="project" value="SGD"/>
</dbReference>
<dbReference type="GO" id="GO:0000122">
    <property type="term" value="P:negative regulation of transcription by RNA polymerase II"/>
    <property type="evidence" value="ECO:0000315"/>
    <property type="project" value="SGD"/>
</dbReference>
<dbReference type="GO" id="GO:2001247">
    <property type="term" value="P:positive regulation of phosphatidylcholine biosynthetic process"/>
    <property type="evidence" value="ECO:0000315"/>
    <property type="project" value="SGD"/>
</dbReference>
<dbReference type="GO" id="GO:1900470">
    <property type="term" value="P:positive regulation of phosphatidylserine biosynthetic process"/>
    <property type="evidence" value="ECO:0000315"/>
    <property type="project" value="SGD"/>
</dbReference>
<dbReference type="GO" id="GO:0045944">
    <property type="term" value="P:positive regulation of transcription by RNA polymerase II"/>
    <property type="evidence" value="ECO:0000315"/>
    <property type="project" value="SGD"/>
</dbReference>
<dbReference type="GO" id="GO:0007124">
    <property type="term" value="P:pseudohyphal growth"/>
    <property type="evidence" value="ECO:0000315"/>
    <property type="project" value="SGD"/>
</dbReference>
<dbReference type="GO" id="GO:0042173">
    <property type="term" value="P:regulation of sporulation resulting in formation of a cellular spore"/>
    <property type="evidence" value="ECO:0000314"/>
    <property type="project" value="ComplexPortal"/>
</dbReference>
<dbReference type="GO" id="GO:0009847">
    <property type="term" value="P:spore germination"/>
    <property type="evidence" value="ECO:0000315"/>
    <property type="project" value="SGD"/>
</dbReference>
<dbReference type="CDD" id="cd00067">
    <property type="entry name" value="GAL4"/>
    <property type="match status" value="1"/>
</dbReference>
<dbReference type="FunFam" id="4.10.240.10:FF:000017">
    <property type="entry name" value="Transcriptional regulator UME6"/>
    <property type="match status" value="1"/>
</dbReference>
<dbReference type="Gene3D" id="4.10.240.10">
    <property type="entry name" value="Zn(2)-C6 fungal-type DNA-binding domain"/>
    <property type="match status" value="1"/>
</dbReference>
<dbReference type="InterPro" id="IPR036864">
    <property type="entry name" value="Zn2-C6_fun-type_DNA-bd_sf"/>
</dbReference>
<dbReference type="InterPro" id="IPR001138">
    <property type="entry name" value="Zn2Cys6_DnaBD"/>
</dbReference>
<dbReference type="Pfam" id="PF00172">
    <property type="entry name" value="Zn_clus"/>
    <property type="match status" value="1"/>
</dbReference>
<dbReference type="SMART" id="SM00066">
    <property type="entry name" value="GAL4"/>
    <property type="match status" value="1"/>
</dbReference>
<dbReference type="SUPFAM" id="SSF57701">
    <property type="entry name" value="Zn2/Cys6 DNA-binding domain"/>
    <property type="match status" value="1"/>
</dbReference>
<dbReference type="PROSITE" id="PS00463">
    <property type="entry name" value="ZN2_CY6_FUNGAL_1"/>
    <property type="match status" value="1"/>
</dbReference>
<dbReference type="PROSITE" id="PS50048">
    <property type="entry name" value="ZN2_CY6_FUNGAL_2"/>
    <property type="match status" value="1"/>
</dbReference>
<accession>P39001</accession>
<accession>D6VSI8</accession>